<name>RS6_ERWT9</name>
<keyword id="KW-1185">Reference proteome</keyword>
<keyword id="KW-0687">Ribonucleoprotein</keyword>
<keyword id="KW-0689">Ribosomal protein</keyword>
<keyword id="KW-0694">RNA-binding</keyword>
<keyword id="KW-0699">rRNA-binding</keyword>
<accession>B2VCW1</accession>
<gene>
    <name evidence="1" type="primary">rpsF</name>
    <name type="ordered locus">ETA_29550</name>
</gene>
<reference key="1">
    <citation type="journal article" date="2008" name="Environ. Microbiol.">
        <title>The genome of Erwinia tasmaniensis strain Et1/99, a non-pathogenic bacterium in the genus Erwinia.</title>
        <authorList>
            <person name="Kube M."/>
            <person name="Migdoll A.M."/>
            <person name="Mueller I."/>
            <person name="Kuhl H."/>
            <person name="Beck A."/>
            <person name="Reinhardt R."/>
            <person name="Geider K."/>
        </authorList>
    </citation>
    <scope>NUCLEOTIDE SEQUENCE [LARGE SCALE GENOMIC DNA]</scope>
    <source>
        <strain>DSM 17950 / CFBP 7177 / CIP 109463 / NCPPB 4357 / Et1/99</strain>
    </source>
</reference>
<organism>
    <name type="scientific">Erwinia tasmaniensis (strain DSM 17950 / CFBP 7177 / CIP 109463 / NCPPB 4357 / Et1/99)</name>
    <dbReference type="NCBI Taxonomy" id="465817"/>
    <lineage>
        <taxon>Bacteria</taxon>
        <taxon>Pseudomonadati</taxon>
        <taxon>Pseudomonadota</taxon>
        <taxon>Gammaproteobacteria</taxon>
        <taxon>Enterobacterales</taxon>
        <taxon>Erwiniaceae</taxon>
        <taxon>Erwinia</taxon>
    </lineage>
</organism>
<dbReference type="EMBL" id="CU468135">
    <property type="protein sequence ID" value="CAO98001.1"/>
    <property type="molecule type" value="Genomic_DNA"/>
</dbReference>
<dbReference type="RefSeq" id="WP_004160104.1">
    <property type="nucleotide sequence ID" value="NC_010694.1"/>
</dbReference>
<dbReference type="SMR" id="B2VCW1"/>
<dbReference type="STRING" id="465817.ETA_29550"/>
<dbReference type="GeneID" id="97607287"/>
<dbReference type="KEGG" id="eta:ETA_29550"/>
<dbReference type="eggNOG" id="COG0360">
    <property type="taxonomic scope" value="Bacteria"/>
</dbReference>
<dbReference type="HOGENOM" id="CLU_113441_6_1_6"/>
<dbReference type="OrthoDB" id="9812702at2"/>
<dbReference type="Proteomes" id="UP000001726">
    <property type="component" value="Chromosome"/>
</dbReference>
<dbReference type="GO" id="GO:0022627">
    <property type="term" value="C:cytosolic small ribosomal subunit"/>
    <property type="evidence" value="ECO:0007669"/>
    <property type="project" value="TreeGrafter"/>
</dbReference>
<dbReference type="GO" id="GO:0070181">
    <property type="term" value="F:small ribosomal subunit rRNA binding"/>
    <property type="evidence" value="ECO:0007669"/>
    <property type="project" value="TreeGrafter"/>
</dbReference>
<dbReference type="GO" id="GO:0003735">
    <property type="term" value="F:structural constituent of ribosome"/>
    <property type="evidence" value="ECO:0007669"/>
    <property type="project" value="InterPro"/>
</dbReference>
<dbReference type="GO" id="GO:0006412">
    <property type="term" value="P:translation"/>
    <property type="evidence" value="ECO:0007669"/>
    <property type="project" value="UniProtKB-UniRule"/>
</dbReference>
<dbReference type="CDD" id="cd00473">
    <property type="entry name" value="bS6"/>
    <property type="match status" value="1"/>
</dbReference>
<dbReference type="FunFam" id="3.30.70.60:FF:000003">
    <property type="entry name" value="30S ribosomal protein S6"/>
    <property type="match status" value="1"/>
</dbReference>
<dbReference type="Gene3D" id="3.30.70.60">
    <property type="match status" value="1"/>
</dbReference>
<dbReference type="HAMAP" id="MF_00360">
    <property type="entry name" value="Ribosomal_bS6"/>
    <property type="match status" value="1"/>
</dbReference>
<dbReference type="InterPro" id="IPR000529">
    <property type="entry name" value="Ribosomal_bS6"/>
</dbReference>
<dbReference type="InterPro" id="IPR020815">
    <property type="entry name" value="Ribosomal_bS6_CS"/>
</dbReference>
<dbReference type="InterPro" id="IPR035980">
    <property type="entry name" value="Ribosomal_bS6_sf"/>
</dbReference>
<dbReference type="InterPro" id="IPR020814">
    <property type="entry name" value="Ribosomal_S6_plastid/chlpt"/>
</dbReference>
<dbReference type="InterPro" id="IPR014717">
    <property type="entry name" value="Transl_elong_EF1B/ribsomal_bS6"/>
</dbReference>
<dbReference type="NCBIfam" id="TIGR00166">
    <property type="entry name" value="S6"/>
    <property type="match status" value="1"/>
</dbReference>
<dbReference type="PANTHER" id="PTHR21011">
    <property type="entry name" value="MITOCHONDRIAL 28S RIBOSOMAL PROTEIN S6"/>
    <property type="match status" value="1"/>
</dbReference>
<dbReference type="PANTHER" id="PTHR21011:SF1">
    <property type="entry name" value="SMALL RIBOSOMAL SUBUNIT PROTEIN BS6M"/>
    <property type="match status" value="1"/>
</dbReference>
<dbReference type="Pfam" id="PF01250">
    <property type="entry name" value="Ribosomal_S6"/>
    <property type="match status" value="1"/>
</dbReference>
<dbReference type="SUPFAM" id="SSF54995">
    <property type="entry name" value="Ribosomal protein S6"/>
    <property type="match status" value="1"/>
</dbReference>
<dbReference type="PROSITE" id="PS01048">
    <property type="entry name" value="RIBOSOMAL_S6"/>
    <property type="match status" value="1"/>
</dbReference>
<protein>
    <recommendedName>
        <fullName evidence="1">Small ribosomal subunit protein bS6</fullName>
    </recommendedName>
    <alternativeName>
        <fullName evidence="3">30S ribosomal protein S6</fullName>
    </alternativeName>
</protein>
<evidence type="ECO:0000255" key="1">
    <source>
        <dbReference type="HAMAP-Rule" id="MF_00360"/>
    </source>
</evidence>
<evidence type="ECO:0000256" key="2">
    <source>
        <dbReference type="SAM" id="MobiDB-lite"/>
    </source>
</evidence>
<evidence type="ECO:0000305" key="3"/>
<sequence>MRHYEIVFMVHPDQSEQVPGMIERYSATITGAEGTIHRLEDWGRRQLAYPINKLHKAHYVLLNVEAPQEAIDELETNFRFNDAVIRSMVMRVKHAVTEASPMVKAKDERRERREDFANETSDDADAGDSEE</sequence>
<feature type="chain" id="PRO_1000120752" description="Small ribosomal subunit protein bS6">
    <location>
        <begin position="1"/>
        <end position="131"/>
    </location>
</feature>
<feature type="region of interest" description="Disordered" evidence="2">
    <location>
        <begin position="100"/>
        <end position="131"/>
    </location>
</feature>
<feature type="compositionally biased region" description="Basic and acidic residues" evidence="2">
    <location>
        <begin position="104"/>
        <end position="116"/>
    </location>
</feature>
<feature type="compositionally biased region" description="Acidic residues" evidence="2">
    <location>
        <begin position="120"/>
        <end position="131"/>
    </location>
</feature>
<proteinExistence type="inferred from homology"/>
<comment type="function">
    <text evidence="1">Binds together with bS18 to 16S ribosomal RNA.</text>
</comment>
<comment type="similarity">
    <text evidence="1">Belongs to the bacterial ribosomal protein bS6 family.</text>
</comment>